<keyword id="KW-0256">Endoplasmic reticulum</keyword>
<keyword id="KW-0472">Membrane</keyword>
<keyword id="KW-0597">Phosphoprotein</keyword>
<keyword id="KW-1185">Reference proteome</keyword>
<keyword id="KW-0812">Transmembrane</keyword>
<keyword id="KW-1133">Transmembrane helix</keyword>
<name>YNF5_SCHPO</name>
<sequence>MESSREEALRCIGLARKYLNAGEYDKALKFANKSLRIHATTEGEDFVKQIEKQKLTGSPNPQATPKQENKSNFFSEKQSVRENGNSSAGEKKQKWTSEQHLLVQKIIKYKNHQYYEILDLKKTCTDTEIKKSYKKLALQLHPDKNHAPSADEAFKMVSKAFQVLSDPNLRAHYDRTGMDPESRASAASSSFSSNAGGHPGFSAYPQANMSPEDLFNSFFGDQFFSGPGTFFFGGGPGIRVHQFGGRPRNFARRQQAQDMPPKSIFYQLLPLIVVILFAFLSNFSWSDSTSVNTRYSFQQNYKYTVPRTTAKHNIPYYMSQKDLDKLSSRDIRRLNEKVEHTYTQNVHNACLREQQIKEDEIRRAQGWFFPDKEALKKAKELRLPNCEELNRLGYRTYSNSYYF</sequence>
<organism>
    <name type="scientific">Schizosaccharomyces pombe (strain 972 / ATCC 24843)</name>
    <name type="common">Fission yeast</name>
    <dbReference type="NCBI Taxonomy" id="284812"/>
    <lineage>
        <taxon>Eukaryota</taxon>
        <taxon>Fungi</taxon>
        <taxon>Dikarya</taxon>
        <taxon>Ascomycota</taxon>
        <taxon>Taphrinomycotina</taxon>
        <taxon>Schizosaccharomycetes</taxon>
        <taxon>Schizosaccharomycetales</taxon>
        <taxon>Schizosaccharomycetaceae</taxon>
        <taxon>Schizosaccharomyces</taxon>
    </lineage>
</organism>
<dbReference type="EMBL" id="AB004537">
    <property type="protein sequence ID" value="BAA21421.1"/>
    <property type="molecule type" value="Genomic_DNA"/>
</dbReference>
<dbReference type="EMBL" id="CU329671">
    <property type="protein sequence ID" value="CAB51764.1"/>
    <property type="molecule type" value="Genomic_DNA"/>
</dbReference>
<dbReference type="PIR" id="T39697">
    <property type="entry name" value="T39697"/>
</dbReference>
<dbReference type="RefSeq" id="NP_595587.1">
    <property type="nucleotide sequence ID" value="NM_001021483.2"/>
</dbReference>
<dbReference type="SMR" id="O13633"/>
<dbReference type="BioGRID" id="276667">
    <property type="interactions" value="3"/>
</dbReference>
<dbReference type="FunCoup" id="O13633">
    <property type="interactions" value="477"/>
</dbReference>
<dbReference type="STRING" id="284812.O13633"/>
<dbReference type="iPTMnet" id="O13633"/>
<dbReference type="PaxDb" id="4896-SPBC17A3.05c.1"/>
<dbReference type="EnsemblFungi" id="SPBC17A3.05c.1">
    <property type="protein sequence ID" value="SPBC17A3.05c.1:pep"/>
    <property type="gene ID" value="SPBC17A3.05c"/>
</dbReference>
<dbReference type="KEGG" id="spo:2540130"/>
<dbReference type="PomBase" id="SPBC17A3.05c"/>
<dbReference type="VEuPathDB" id="FungiDB:SPBC17A3.05c"/>
<dbReference type="eggNOG" id="KOG0714">
    <property type="taxonomic scope" value="Eukaryota"/>
</dbReference>
<dbReference type="HOGENOM" id="CLU_043579_2_0_1"/>
<dbReference type="InParanoid" id="O13633"/>
<dbReference type="OMA" id="ARSREHN"/>
<dbReference type="PhylomeDB" id="O13633"/>
<dbReference type="PRO" id="PR:O13633"/>
<dbReference type="Proteomes" id="UP000002485">
    <property type="component" value="Chromosome II"/>
</dbReference>
<dbReference type="GO" id="GO:0005783">
    <property type="term" value="C:endoplasmic reticulum"/>
    <property type="evidence" value="ECO:0007005"/>
    <property type="project" value="PomBase"/>
</dbReference>
<dbReference type="GO" id="GO:0005789">
    <property type="term" value="C:endoplasmic reticulum membrane"/>
    <property type="evidence" value="ECO:0000318"/>
    <property type="project" value="GO_Central"/>
</dbReference>
<dbReference type="GO" id="GO:0030544">
    <property type="term" value="F:Hsp70 protein binding"/>
    <property type="evidence" value="ECO:0000318"/>
    <property type="project" value="GO_Central"/>
</dbReference>
<dbReference type="GO" id="GO:0071218">
    <property type="term" value="P:cellular response to misfolded protein"/>
    <property type="evidence" value="ECO:0000318"/>
    <property type="project" value="GO_Central"/>
</dbReference>
<dbReference type="GO" id="GO:0051085">
    <property type="term" value="P:chaperone cofactor-dependent protein refolding"/>
    <property type="evidence" value="ECO:0000318"/>
    <property type="project" value="GO_Central"/>
</dbReference>
<dbReference type="GO" id="GO:0034975">
    <property type="term" value="P:protein folding in endoplasmic reticulum"/>
    <property type="evidence" value="ECO:0000250"/>
    <property type="project" value="PomBase"/>
</dbReference>
<dbReference type="CDD" id="cd06257">
    <property type="entry name" value="DnaJ"/>
    <property type="match status" value="1"/>
</dbReference>
<dbReference type="FunFam" id="1.10.287.110:FF:000070">
    <property type="entry name" value="Endoplasmic reticulum protein, putative"/>
    <property type="match status" value="1"/>
</dbReference>
<dbReference type="Gene3D" id="1.10.287.110">
    <property type="entry name" value="DnaJ domain"/>
    <property type="match status" value="1"/>
</dbReference>
<dbReference type="InterPro" id="IPR001623">
    <property type="entry name" value="DnaJ_domain"/>
</dbReference>
<dbReference type="InterPro" id="IPR018253">
    <property type="entry name" value="DnaJ_domain_CS"/>
</dbReference>
<dbReference type="InterPro" id="IPR051100">
    <property type="entry name" value="DnaJ_subfamily_B/C"/>
</dbReference>
<dbReference type="InterPro" id="IPR015399">
    <property type="entry name" value="DUF1977_DnaJ-like"/>
</dbReference>
<dbReference type="InterPro" id="IPR036869">
    <property type="entry name" value="J_dom_sf"/>
</dbReference>
<dbReference type="PANTHER" id="PTHR43908">
    <property type="entry name" value="AT29763P-RELATED"/>
    <property type="match status" value="1"/>
</dbReference>
<dbReference type="PANTHER" id="PTHR43908:SF3">
    <property type="entry name" value="AT29763P-RELATED"/>
    <property type="match status" value="1"/>
</dbReference>
<dbReference type="Pfam" id="PF00226">
    <property type="entry name" value="DnaJ"/>
    <property type="match status" value="1"/>
</dbReference>
<dbReference type="Pfam" id="PF09320">
    <property type="entry name" value="DUF1977"/>
    <property type="match status" value="1"/>
</dbReference>
<dbReference type="PRINTS" id="PR00625">
    <property type="entry name" value="JDOMAIN"/>
</dbReference>
<dbReference type="SMART" id="SM00271">
    <property type="entry name" value="DnaJ"/>
    <property type="match status" value="1"/>
</dbReference>
<dbReference type="SUPFAM" id="SSF46565">
    <property type="entry name" value="Chaperone J-domain"/>
    <property type="match status" value="1"/>
</dbReference>
<dbReference type="PROSITE" id="PS00636">
    <property type="entry name" value="DNAJ_1"/>
    <property type="match status" value="1"/>
</dbReference>
<dbReference type="PROSITE" id="PS50076">
    <property type="entry name" value="DNAJ_2"/>
    <property type="match status" value="1"/>
</dbReference>
<proteinExistence type="evidence at protein level"/>
<reference key="1">
    <citation type="journal article" date="2000" name="Yeast">
        <title>A 38 kb segment containing the cdc2 gene from the left arm of fission yeast chromosome II: sequence analysis and characterization of the genomic DNA and cDNAs encoded on the segment.</title>
        <authorList>
            <person name="Machida M."/>
            <person name="Yamazaki S."/>
            <person name="Kunihiro S."/>
            <person name="Tanaka T."/>
            <person name="Kushida N."/>
            <person name="Jinno K."/>
            <person name="Haikawa Y."/>
            <person name="Yamazaki J."/>
            <person name="Yamamoto S."/>
            <person name="Sekine M."/>
            <person name="Oguchi A."/>
            <person name="Nagai Y."/>
            <person name="Sakai M."/>
            <person name="Aoki K."/>
            <person name="Ogura K."/>
            <person name="Kudoh Y."/>
            <person name="Kikuchi H."/>
            <person name="Zhang M.Q."/>
            <person name="Yanagida M."/>
        </authorList>
    </citation>
    <scope>NUCLEOTIDE SEQUENCE [LARGE SCALE GENOMIC DNA]</scope>
    <source>
        <strain>972 / ATCC 24843</strain>
    </source>
</reference>
<reference key="2">
    <citation type="journal article" date="2002" name="Nature">
        <title>The genome sequence of Schizosaccharomyces pombe.</title>
        <authorList>
            <person name="Wood V."/>
            <person name="Gwilliam R."/>
            <person name="Rajandream M.A."/>
            <person name="Lyne M.H."/>
            <person name="Lyne R."/>
            <person name="Stewart A."/>
            <person name="Sgouros J.G."/>
            <person name="Peat N."/>
            <person name="Hayles J."/>
            <person name="Baker S.G."/>
            <person name="Basham D."/>
            <person name="Bowman S."/>
            <person name="Brooks K."/>
            <person name="Brown D."/>
            <person name="Brown S."/>
            <person name="Chillingworth T."/>
            <person name="Churcher C.M."/>
            <person name="Collins M."/>
            <person name="Connor R."/>
            <person name="Cronin A."/>
            <person name="Davis P."/>
            <person name="Feltwell T."/>
            <person name="Fraser A."/>
            <person name="Gentles S."/>
            <person name="Goble A."/>
            <person name="Hamlin N."/>
            <person name="Harris D.E."/>
            <person name="Hidalgo J."/>
            <person name="Hodgson G."/>
            <person name="Holroyd S."/>
            <person name="Hornsby T."/>
            <person name="Howarth S."/>
            <person name="Huckle E.J."/>
            <person name="Hunt S."/>
            <person name="Jagels K."/>
            <person name="James K.D."/>
            <person name="Jones L."/>
            <person name="Jones M."/>
            <person name="Leather S."/>
            <person name="McDonald S."/>
            <person name="McLean J."/>
            <person name="Mooney P."/>
            <person name="Moule S."/>
            <person name="Mungall K.L."/>
            <person name="Murphy L.D."/>
            <person name="Niblett D."/>
            <person name="Odell C."/>
            <person name="Oliver K."/>
            <person name="O'Neil S."/>
            <person name="Pearson D."/>
            <person name="Quail M.A."/>
            <person name="Rabbinowitsch E."/>
            <person name="Rutherford K.M."/>
            <person name="Rutter S."/>
            <person name="Saunders D."/>
            <person name="Seeger K."/>
            <person name="Sharp S."/>
            <person name="Skelton J."/>
            <person name="Simmonds M.N."/>
            <person name="Squares R."/>
            <person name="Squares S."/>
            <person name="Stevens K."/>
            <person name="Taylor K."/>
            <person name="Taylor R.G."/>
            <person name="Tivey A."/>
            <person name="Walsh S.V."/>
            <person name="Warren T."/>
            <person name="Whitehead S."/>
            <person name="Woodward J.R."/>
            <person name="Volckaert G."/>
            <person name="Aert R."/>
            <person name="Robben J."/>
            <person name="Grymonprez B."/>
            <person name="Weltjens I."/>
            <person name="Vanstreels E."/>
            <person name="Rieger M."/>
            <person name="Schaefer M."/>
            <person name="Mueller-Auer S."/>
            <person name="Gabel C."/>
            <person name="Fuchs M."/>
            <person name="Duesterhoeft A."/>
            <person name="Fritzc C."/>
            <person name="Holzer E."/>
            <person name="Moestl D."/>
            <person name="Hilbert H."/>
            <person name="Borzym K."/>
            <person name="Langer I."/>
            <person name="Beck A."/>
            <person name="Lehrach H."/>
            <person name="Reinhardt R."/>
            <person name="Pohl T.M."/>
            <person name="Eger P."/>
            <person name="Zimmermann W."/>
            <person name="Wedler H."/>
            <person name="Wambutt R."/>
            <person name="Purnelle B."/>
            <person name="Goffeau A."/>
            <person name="Cadieu E."/>
            <person name="Dreano S."/>
            <person name="Gloux S."/>
            <person name="Lelaure V."/>
            <person name="Mottier S."/>
            <person name="Galibert F."/>
            <person name="Aves S.J."/>
            <person name="Xiang Z."/>
            <person name="Hunt C."/>
            <person name="Moore K."/>
            <person name="Hurst S.M."/>
            <person name="Lucas M."/>
            <person name="Rochet M."/>
            <person name="Gaillardin C."/>
            <person name="Tallada V.A."/>
            <person name="Garzon A."/>
            <person name="Thode G."/>
            <person name="Daga R.R."/>
            <person name="Cruzado L."/>
            <person name="Jimenez J."/>
            <person name="Sanchez M."/>
            <person name="del Rey F."/>
            <person name="Benito J."/>
            <person name="Dominguez A."/>
            <person name="Revuelta J.L."/>
            <person name="Moreno S."/>
            <person name="Armstrong J."/>
            <person name="Forsburg S.L."/>
            <person name="Cerutti L."/>
            <person name="Lowe T."/>
            <person name="McCombie W.R."/>
            <person name="Paulsen I."/>
            <person name="Potashkin J."/>
            <person name="Shpakovski G.V."/>
            <person name="Ussery D."/>
            <person name="Barrell B.G."/>
            <person name="Nurse P."/>
        </authorList>
    </citation>
    <scope>NUCLEOTIDE SEQUENCE [LARGE SCALE GENOMIC DNA]</scope>
    <source>
        <strain>972 / ATCC 24843</strain>
    </source>
</reference>
<reference key="3">
    <citation type="journal article" date="2006" name="Nat. Biotechnol.">
        <title>ORFeome cloning and global analysis of protein localization in the fission yeast Schizosaccharomyces pombe.</title>
        <authorList>
            <person name="Matsuyama A."/>
            <person name="Arai R."/>
            <person name="Yashiroda Y."/>
            <person name="Shirai A."/>
            <person name="Kamata A."/>
            <person name="Sekido S."/>
            <person name="Kobayashi Y."/>
            <person name="Hashimoto A."/>
            <person name="Hamamoto M."/>
            <person name="Hiraoka Y."/>
            <person name="Horinouchi S."/>
            <person name="Yoshida M."/>
        </authorList>
    </citation>
    <scope>SUBCELLULAR LOCATION [LARGE SCALE ANALYSIS]</scope>
</reference>
<reference key="4">
    <citation type="journal article" date="2008" name="J. Proteome Res.">
        <title>Phosphoproteome analysis of fission yeast.</title>
        <authorList>
            <person name="Wilson-Grady J.T."/>
            <person name="Villen J."/>
            <person name="Gygi S.P."/>
        </authorList>
    </citation>
    <scope>PHOSPHORYLATION [LARGE SCALE ANALYSIS] AT SER-58</scope>
    <scope>IDENTIFICATION BY MASS SPECTROMETRY</scope>
</reference>
<protein>
    <recommendedName>
        <fullName>Uncharacterized J domain-containing protein C17A3.05c</fullName>
    </recommendedName>
</protein>
<accession>O13633</accession>
<comment type="subcellular location">
    <subcellularLocation>
        <location evidence="5">Endoplasmic reticulum membrane</location>
        <topology evidence="5">Single-pass membrane protein</topology>
    </subcellularLocation>
</comment>
<feature type="chain" id="PRO_0000363406" description="Uncharacterized J domain-containing protein C17A3.05c">
    <location>
        <begin position="1"/>
        <end position="403"/>
    </location>
</feature>
<feature type="transmembrane region" description="Helical" evidence="1">
    <location>
        <begin position="263"/>
        <end position="283"/>
    </location>
</feature>
<feature type="domain" description="J" evidence="2">
    <location>
        <begin position="113"/>
        <end position="177"/>
    </location>
</feature>
<feature type="region of interest" description="Disordered" evidence="3">
    <location>
        <begin position="55"/>
        <end position="95"/>
    </location>
</feature>
<feature type="compositionally biased region" description="Polar residues" evidence="3">
    <location>
        <begin position="55"/>
        <end position="88"/>
    </location>
</feature>
<feature type="modified residue" description="Phosphoserine" evidence="4">
    <location>
        <position position="58"/>
    </location>
</feature>
<gene>
    <name type="ORF">pi041</name>
    <name type="ORF">SPBC17A3.05c</name>
</gene>
<evidence type="ECO:0000255" key="1"/>
<evidence type="ECO:0000255" key="2">
    <source>
        <dbReference type="PROSITE-ProRule" id="PRU00286"/>
    </source>
</evidence>
<evidence type="ECO:0000256" key="3">
    <source>
        <dbReference type="SAM" id="MobiDB-lite"/>
    </source>
</evidence>
<evidence type="ECO:0000269" key="4">
    <source>
    </source>
</evidence>
<evidence type="ECO:0000305" key="5"/>